<accession>Q4WYN6</accession>
<accession>Q4WYN7</accession>
<keyword id="KW-0413">Isomerase</keyword>
<keyword id="KW-0436">Ligase</keyword>
<keyword id="KW-0560">Oxidoreductase</keyword>
<keyword id="KW-0596">Phosphopantetheine</keyword>
<keyword id="KW-0597">Phosphoprotein</keyword>
<keyword id="KW-1185">Reference proteome</keyword>
<organism>
    <name type="scientific">Aspergillus fumigatus (strain ATCC MYA-4609 / CBS 101355 / FGSC A1100 / Af293)</name>
    <name type="common">Neosartorya fumigata</name>
    <dbReference type="NCBI Taxonomy" id="330879"/>
    <lineage>
        <taxon>Eukaryota</taxon>
        <taxon>Fungi</taxon>
        <taxon>Dikarya</taxon>
        <taxon>Ascomycota</taxon>
        <taxon>Pezizomycotina</taxon>
        <taxon>Eurotiomycetes</taxon>
        <taxon>Eurotiomycetidae</taxon>
        <taxon>Eurotiales</taxon>
        <taxon>Aspergillaceae</taxon>
        <taxon>Aspergillus</taxon>
        <taxon>Aspergillus subgen. Fumigati</taxon>
    </lineage>
</organism>
<reference key="1">
    <citation type="journal article" date="2005" name="Nature">
        <title>Genomic sequence of the pathogenic and allergenic filamentous fungus Aspergillus fumigatus.</title>
        <authorList>
            <person name="Nierman W.C."/>
            <person name="Pain A."/>
            <person name="Anderson M.J."/>
            <person name="Wortman J.R."/>
            <person name="Kim H.S."/>
            <person name="Arroyo J."/>
            <person name="Berriman M."/>
            <person name="Abe K."/>
            <person name="Archer D.B."/>
            <person name="Bermejo C."/>
            <person name="Bennett J.W."/>
            <person name="Bowyer P."/>
            <person name="Chen D."/>
            <person name="Collins M."/>
            <person name="Coulsen R."/>
            <person name="Davies R."/>
            <person name="Dyer P.S."/>
            <person name="Farman M.L."/>
            <person name="Fedorova N."/>
            <person name="Fedorova N.D."/>
            <person name="Feldblyum T.V."/>
            <person name="Fischer R."/>
            <person name="Fosker N."/>
            <person name="Fraser A."/>
            <person name="Garcia J.L."/>
            <person name="Garcia M.J."/>
            <person name="Goble A."/>
            <person name="Goldman G.H."/>
            <person name="Gomi K."/>
            <person name="Griffith-Jones S."/>
            <person name="Gwilliam R."/>
            <person name="Haas B.J."/>
            <person name="Haas H."/>
            <person name="Harris D.E."/>
            <person name="Horiuchi H."/>
            <person name="Huang J."/>
            <person name="Humphray S."/>
            <person name="Jimenez J."/>
            <person name="Keller N."/>
            <person name="Khouri H."/>
            <person name="Kitamoto K."/>
            <person name="Kobayashi T."/>
            <person name="Konzack S."/>
            <person name="Kulkarni R."/>
            <person name="Kumagai T."/>
            <person name="Lafton A."/>
            <person name="Latge J.-P."/>
            <person name="Li W."/>
            <person name="Lord A."/>
            <person name="Lu C."/>
            <person name="Majoros W.H."/>
            <person name="May G.S."/>
            <person name="Miller B.L."/>
            <person name="Mohamoud Y."/>
            <person name="Molina M."/>
            <person name="Monod M."/>
            <person name="Mouyna I."/>
            <person name="Mulligan S."/>
            <person name="Murphy L.D."/>
            <person name="O'Neil S."/>
            <person name="Paulsen I."/>
            <person name="Penalva M.A."/>
            <person name="Pertea M."/>
            <person name="Price C."/>
            <person name="Pritchard B.L."/>
            <person name="Quail M.A."/>
            <person name="Rabbinowitsch E."/>
            <person name="Rawlins N."/>
            <person name="Rajandream M.A."/>
            <person name="Reichard U."/>
            <person name="Renauld H."/>
            <person name="Robson G.D."/>
            <person name="Rodriguez de Cordoba S."/>
            <person name="Rodriguez-Pena J.M."/>
            <person name="Ronning C.M."/>
            <person name="Rutter S."/>
            <person name="Salzberg S.L."/>
            <person name="Sanchez M."/>
            <person name="Sanchez-Ferrero J.C."/>
            <person name="Saunders D."/>
            <person name="Seeger K."/>
            <person name="Squares R."/>
            <person name="Squares S."/>
            <person name="Takeuchi M."/>
            <person name="Tekaia F."/>
            <person name="Turner G."/>
            <person name="Vazquez de Aldana C.R."/>
            <person name="Weidman J."/>
            <person name="White O."/>
            <person name="Woodward J.R."/>
            <person name="Yu J.-H."/>
            <person name="Fraser C.M."/>
            <person name="Galagan J.E."/>
            <person name="Asai K."/>
            <person name="Machida M."/>
            <person name="Hall N."/>
            <person name="Barrell B.G."/>
            <person name="Denning D.W."/>
        </authorList>
    </citation>
    <scope>NUCLEOTIDE SEQUENCE [LARGE SCALE GENOMIC DNA]</scope>
    <source>
        <strain>ATCC MYA-4609 / CBS 101355 / FGSC A1100 / Af293</strain>
    </source>
</reference>
<reference key="2">
    <citation type="journal article" date="2018" name="MBio">
        <title>Fungal isocyanide synthases and xanthocillin biosynthesis in Aspergillus fumigatus.</title>
        <authorList>
            <person name="Lim F.Y."/>
            <person name="Won T.H."/>
            <person name="Raffa N."/>
            <person name="Baccile J.A."/>
            <person name="Wisecaver J."/>
            <person name="Rokas A."/>
            <person name="Schroeder F.C."/>
            <person name="Keller N.P."/>
        </authorList>
    </citation>
    <scope>FUNCTION</scope>
    <scope>INDUCTION</scope>
    <scope>DISRUPTION PHENOTYPE</scope>
    <scope>DOMAIN</scope>
</reference>
<reference key="3">
    <citation type="journal article" date="2022" name="Nat. Commun.">
        <title>Copper starvation induces antimicrobial isocyanide integrated into two distinct biosynthetic pathways in fungi.</title>
        <authorList>
            <person name="Won T.H."/>
            <person name="Bok J.W."/>
            <person name="Nadig N."/>
            <person name="Venkatesh N."/>
            <person name="Nickles G."/>
            <person name="Greco C."/>
            <person name="Lim F.Y."/>
            <person name="Gonzalez J.B."/>
            <person name="Turgeon B.G."/>
            <person name="Keller N.P."/>
            <person name="Schroeder F.C."/>
        </authorList>
    </citation>
    <scope>FUNCTION</scope>
    <scope>DISRUPTION PHENOTYPE</scope>
    <scope>CATALYTIC ACTIVITY</scope>
    <scope>PATHWAY</scope>
</reference>
<proteinExistence type="evidence at protein level"/>
<name>CRMA_ASPFU</name>
<sequence>MFHKEAGISHLILDIILEHALNKFDPAPDRLQGAAKNFLPIIERFVAAGTRIEACLPAFPFKSANKVYKVLGSLPDKAEELALDRLNTMCARVREVYPPGLQVAIISDGITYNDTWAYGEALRQMAAQKQFMYIVFSRIKDLLDIPLPEQMSEIVYVANCTTFRRLLLNKYERADLDIDHEIASNPDTKLTYLGYRRFLESDLKYIFPRGAHRSAHSYKRDCKYLAKQMLIRGDAFAQAIKTSYPNHLRLSIHESVAGTKLSISLLNTKTGFTTPWHCSVAQLANGEWISAPMGEFRKDDRLELVYADGRPSHFREKPREGDAFGISESTASYLQRPKRLRASEYLGATLPSVPVSPGMSSPSAASTSSSGASMQGSAATTPETHSPPTFTWSGLEIVAEDNSNNASVPYGRRLIPQIMDSLAATEPERIVFSLATFSGDSLEFRPISARTFANAIDKTAWWLHNQVGRPDSIQPVGYIGPHDLRHVLLTYACVKAGYAALFLSPKNSTEGALAVLEATKCDLWINACDVSPVPLVKEVLQKRPMNVLQLPQLDELLDAVSTDPFPYTKKFDEAINDPFCFLHTSGTTGVPKPIPWSHGLIGTMDAVRLLPPGADGDLPPWTTDWKTGDTIYSSFPMSHGAGIIMNILMPALFNLHCVFGPAGVLPNINLVDALAVSTRIDIWSMVPSLVDELGETPAVLSKLKSSKFICASGGPVSPVSAGKVNEVIRVLNLTGTTEGLFMGNLIPPREDWFWFCFHPYSGFEFKQVEPDTYEHWVHRNEHWPLFQGIFHTFPEKQSINFKDLYVRHPTKPNLWAFKGRSDDLVTEAFITTHPAIKGCLVFGTGKPQAGLLIELKDPLQKTDELLDSIWETVQQANSMSRHKNQLLRDFVAFATPDKPFCRTDKGTVKRSATLKLYADYIERFYRSRNDDLGGTFDFDMSSAHSIEDNVRKILAASLPDVQEASADTDLFALGLDSLGVFAAIKTIRAATGLGDQIGPRHIYANPTIARLSAIIALLAAAAESASDTTLCERPVDDVGAQIARMIAQHKARQSFSLNAFDYVNPNHGMGLVLYFPIRDGVSYEQVFANLQAGLNRTFDLIPALSGKMTDCSEQGIGYTKGDLCVTIPPLAKADSARNRLVYKDLSAVLPSFDDLRKGGFAPSAFSDTLANFVSGGCILAVDLNHCCLDGLGAMVALKAWAENCRYLQGDQSATCGWYDPESFNHSLPEILHRQEGWARPLHEIDPGTWGFLPFFPPEDEETNPRCEKATEGSLPARPIFPLHPVWPLPRAERCLKTTMFLVTPEKLELLQQDVIADPATNGITPSISDIVQAFFWRAAIKARYRVATEIRKQKFSPDAVSILELPTDTRPHFSSRLPPTYMGSMLILNRTSMPIETLCSAETSIAKVALLLRQSAARITPSLVHDAFTLLQSLPGHRRFSTANMGLEHMHAMISNMLLFPTSEIGFGDAFFANGGVPETMRPQLERGNGRFRFLAVFPLRKDGGVELVLGTHREELEMLVTDEEFTRYARMVDTCC</sequence>
<dbReference type="EC" id="1.-.-.-" evidence="5"/>
<dbReference type="EC" id="6.3.2.-" evidence="5"/>
<dbReference type="EMBL" id="AAHF01000002">
    <property type="protein sequence ID" value="EAL92216.1"/>
    <property type="status" value="ALT_SEQ"/>
    <property type="molecule type" value="Genomic_DNA"/>
</dbReference>
<dbReference type="EMBL" id="AAHF01000002">
    <property type="protein sequence ID" value="EAL92217.1"/>
    <property type="status" value="ALT_SEQ"/>
    <property type="molecule type" value="Genomic_DNA"/>
</dbReference>
<dbReference type="RefSeq" id="XP_754254.1">
    <property type="nucleotide sequence ID" value="XM_749161.1"/>
</dbReference>
<dbReference type="RefSeq" id="XP_754255.1">
    <property type="nucleotide sequence ID" value="XM_749162.1"/>
</dbReference>
<dbReference type="SMR" id="Q4WYN6"/>
<dbReference type="STRING" id="330879.Q4WYN6"/>
<dbReference type="EnsemblFungi" id="EAL92216">
    <property type="protein sequence ID" value="EAL92216"/>
    <property type="gene ID" value="AFUA_3G13700"/>
</dbReference>
<dbReference type="EnsemblFungi" id="EAL92217">
    <property type="protein sequence ID" value="EAL92217"/>
    <property type="gene ID" value="AFUA_3G13690"/>
</dbReference>
<dbReference type="KEGG" id="afm:AFUA_3G13690"/>
<dbReference type="KEGG" id="afm:AFUA_3G13700"/>
<dbReference type="eggNOG" id="ENOG502QRI9">
    <property type="taxonomic scope" value="Eukaryota"/>
</dbReference>
<dbReference type="eggNOG" id="ENOG502SJ3N">
    <property type="taxonomic scope" value="Eukaryota"/>
</dbReference>
<dbReference type="HOGENOM" id="CLU_001116_0_0_1"/>
<dbReference type="InParanoid" id="Q4WYN6"/>
<dbReference type="OrthoDB" id="429813at2759"/>
<dbReference type="Proteomes" id="UP000002530">
    <property type="component" value="Chromosome 3"/>
</dbReference>
<dbReference type="GO" id="GO:0016853">
    <property type="term" value="F:isomerase activity"/>
    <property type="evidence" value="ECO:0007669"/>
    <property type="project" value="UniProtKB-KW"/>
</dbReference>
<dbReference type="GO" id="GO:0016874">
    <property type="term" value="F:ligase activity"/>
    <property type="evidence" value="ECO:0007669"/>
    <property type="project" value="UniProtKB-KW"/>
</dbReference>
<dbReference type="GO" id="GO:0016491">
    <property type="term" value="F:oxidoreductase activity"/>
    <property type="evidence" value="ECO:0007669"/>
    <property type="project" value="UniProtKB-KW"/>
</dbReference>
<dbReference type="FunFam" id="3.30.559.10:FF:000126">
    <property type="entry name" value="Transferase family protein"/>
    <property type="match status" value="1"/>
</dbReference>
<dbReference type="Gene3D" id="1.10.1200.10">
    <property type="entry name" value="ACP-like"/>
    <property type="match status" value="1"/>
</dbReference>
<dbReference type="Gene3D" id="3.30.559.10">
    <property type="entry name" value="Chloramphenicol acetyltransferase-like domain"/>
    <property type="match status" value="2"/>
</dbReference>
<dbReference type="Gene3D" id="3.40.50.12780">
    <property type="entry name" value="N-terminal domain of ligase-like"/>
    <property type="match status" value="1"/>
</dbReference>
<dbReference type="InterPro" id="IPR036736">
    <property type="entry name" value="ACP-like_sf"/>
</dbReference>
<dbReference type="InterPro" id="IPR020845">
    <property type="entry name" value="AMP-binding_CS"/>
</dbReference>
<dbReference type="InterPro" id="IPR000873">
    <property type="entry name" value="AMP-dep_synth/lig_dom"/>
</dbReference>
<dbReference type="InterPro" id="IPR042099">
    <property type="entry name" value="ANL_N_sf"/>
</dbReference>
<dbReference type="InterPro" id="IPR023213">
    <property type="entry name" value="CAT-like_dom_sf"/>
</dbReference>
<dbReference type="InterPro" id="IPR007817">
    <property type="entry name" value="Isocyanide_synthase_DIT1"/>
</dbReference>
<dbReference type="InterPro" id="IPR009081">
    <property type="entry name" value="PP-bd_ACP"/>
</dbReference>
<dbReference type="PANTHER" id="PTHR37285">
    <property type="entry name" value="SPORE WALL MATURATION PROTEIN DIT1"/>
    <property type="match status" value="1"/>
</dbReference>
<dbReference type="PANTHER" id="PTHR37285:SF5">
    <property type="entry name" value="SPORE WALL MATURATION PROTEIN DIT1"/>
    <property type="match status" value="1"/>
</dbReference>
<dbReference type="Pfam" id="PF00501">
    <property type="entry name" value="AMP-binding"/>
    <property type="match status" value="1"/>
</dbReference>
<dbReference type="Pfam" id="PF23562">
    <property type="entry name" value="AMP-binding_C_3"/>
    <property type="match status" value="1"/>
</dbReference>
<dbReference type="Pfam" id="PF05141">
    <property type="entry name" value="DIT1_PvcA"/>
    <property type="match status" value="1"/>
</dbReference>
<dbReference type="Pfam" id="PF00550">
    <property type="entry name" value="PP-binding"/>
    <property type="match status" value="1"/>
</dbReference>
<dbReference type="SUPFAM" id="SSF56801">
    <property type="entry name" value="Acetyl-CoA synthetase-like"/>
    <property type="match status" value="1"/>
</dbReference>
<dbReference type="SUPFAM" id="SSF47336">
    <property type="entry name" value="ACP-like"/>
    <property type="match status" value="1"/>
</dbReference>
<dbReference type="PROSITE" id="PS00455">
    <property type="entry name" value="AMP_BINDING"/>
    <property type="match status" value="1"/>
</dbReference>
<dbReference type="PROSITE" id="PS50075">
    <property type="entry name" value="CARRIER"/>
    <property type="match status" value="1"/>
</dbReference>
<comment type="function">
    <text evidence="4 5">Isocyanide synthase-NRPS hybrid; part of the crm gene cluster that mediates the biosynthesis of a yet unidentified copper-responsive metabolite (PubMed:29844112). Converts valine into valine isocyanide that then contributes to two distinct biosynthetic pathways under copper-limiting conditions (PubMed:35973982). Reaction of valine isocyanide with the imine intermediate of festuclavine results in formation of the amide bond in fumivaline A (PubMed:35973982). In addition, valine isocyanide contributes to biosynthesis of a family of acylated sugar alcohols, the D-mannitol-derived fumicicolins (PubMed:35973982). CrmA and associated products inhibit microbial growth from copper-starved A.fumigatus (PubMed:35973982).</text>
</comment>
<comment type="pathway">
    <text evidence="4 5">Secondary metabolite biosynthesis.</text>
</comment>
<comment type="induction">
    <text evidence="4">Expressed in copper depleted conditions via the regulation of the macA transcription factor.</text>
</comment>
<comment type="disruption phenotype">
    <text evidence="4 5">Does not affect the xanthocillin production (PubMed:29844112). Abolishes the production of fumivalines and fumicicolins (PubMed:35973982).</text>
</comment>
<comment type="similarity">
    <text evidence="7">In the N-terminal section; belongs to the isocyanide synthase family.</text>
</comment>
<comment type="similarity">
    <text evidence="7">In the C-terminal section; belongs to the NRP synthetase family.</text>
</comment>
<comment type="sequence caution" evidence="4">
    <conflict type="erroneous gene model prediction">
        <sequence resource="EMBL-CDS" id="EAL92216"/>
    </conflict>
    <text>The predicted genes AFUA_3G13690 and AFUA_3G13700 have been merged into 1 gene: crmA.</text>
</comment>
<comment type="sequence caution" evidence="4">
    <conflict type="erroneous gene model prediction">
        <sequence resource="EMBL-CDS" id="EAL92217"/>
    </conflict>
    <text>The predicted genes AFUA_3G13690 and AFUA_3G13700 have been merged into 1 gene: crmA.</text>
</comment>
<evidence type="ECO:0000255" key="1"/>
<evidence type="ECO:0000255" key="2">
    <source>
        <dbReference type="PROSITE-ProRule" id="PRU00258"/>
    </source>
</evidence>
<evidence type="ECO:0000256" key="3">
    <source>
        <dbReference type="SAM" id="MobiDB-lite"/>
    </source>
</evidence>
<evidence type="ECO:0000269" key="4">
    <source>
    </source>
</evidence>
<evidence type="ECO:0000269" key="5">
    <source>
    </source>
</evidence>
<evidence type="ECO:0000303" key="6">
    <source>
    </source>
</evidence>
<evidence type="ECO:0000305" key="7"/>
<evidence type="ECO:0000305" key="8">
    <source>
    </source>
</evidence>
<gene>
    <name evidence="6" type="primary">crmA</name>
    <name type="ORF">AFUA_3G13690/AFUA_3G13700</name>
</gene>
<protein>
    <recommendedName>
        <fullName evidence="6">Isocyanide synthase-NRPS hybrid crmA</fullName>
        <shortName evidence="6">ICS-NRPS crmA</shortName>
        <ecNumber evidence="5">1.-.-.-</ecNumber>
        <ecNumber evidence="5">6.3.2.-</ecNumber>
    </recommendedName>
    <alternativeName>
        <fullName evidence="6">Copper-responsive metabolite biosynthesis cluster protein A</fullName>
    </alternativeName>
</protein>
<feature type="chain" id="PRO_0000445290" description="Isocyanide synthase-NRPS hybrid crmA">
    <location>
        <begin position="1"/>
        <end position="1537"/>
    </location>
</feature>
<feature type="domain" description="Carrier" evidence="2 8">
    <location>
        <begin position="941"/>
        <end position="1019"/>
    </location>
</feature>
<feature type="region of interest" description="Isocyanide synthase domain" evidence="8">
    <location>
        <begin position="1"/>
        <end position="502"/>
    </location>
</feature>
<feature type="region of interest" description="Disordered" evidence="3">
    <location>
        <begin position="351"/>
        <end position="391"/>
    </location>
</feature>
<feature type="region of interest" description="Adenylation" evidence="1 8">
    <location>
        <begin position="573"/>
        <end position="752"/>
    </location>
</feature>
<feature type="region of interest" description="Transferase" evidence="1 8">
    <location>
        <begin position="1293"/>
        <end position="1526"/>
    </location>
</feature>
<feature type="compositionally biased region" description="Low complexity" evidence="3">
    <location>
        <begin position="352"/>
        <end position="381"/>
    </location>
</feature>
<feature type="compositionally biased region" description="Polar residues" evidence="3">
    <location>
        <begin position="382"/>
        <end position="391"/>
    </location>
</feature>
<feature type="modified residue" description="O-(pantetheine 4'-phosphoryl)serine" evidence="2">
    <location>
        <position position="977"/>
    </location>
</feature>